<feature type="chain" id="PRO_1000071801" description="Adenylate kinase">
    <location>
        <begin position="1"/>
        <end position="218"/>
    </location>
</feature>
<feature type="region of interest" description="NMP" evidence="1">
    <location>
        <begin position="31"/>
        <end position="60"/>
    </location>
</feature>
<feature type="region of interest" description="LID" evidence="1">
    <location>
        <begin position="127"/>
        <end position="165"/>
    </location>
</feature>
<feature type="binding site" evidence="1">
    <location>
        <begin position="11"/>
        <end position="16"/>
    </location>
    <ligand>
        <name>ATP</name>
        <dbReference type="ChEBI" id="CHEBI:30616"/>
    </ligand>
</feature>
<feature type="binding site" evidence="1">
    <location>
        <position position="32"/>
    </location>
    <ligand>
        <name>AMP</name>
        <dbReference type="ChEBI" id="CHEBI:456215"/>
    </ligand>
</feature>
<feature type="binding site" evidence="1">
    <location>
        <position position="37"/>
    </location>
    <ligand>
        <name>AMP</name>
        <dbReference type="ChEBI" id="CHEBI:456215"/>
    </ligand>
</feature>
<feature type="binding site" evidence="1">
    <location>
        <begin position="58"/>
        <end position="60"/>
    </location>
    <ligand>
        <name>AMP</name>
        <dbReference type="ChEBI" id="CHEBI:456215"/>
    </ligand>
</feature>
<feature type="binding site" evidence="1">
    <location>
        <begin position="86"/>
        <end position="89"/>
    </location>
    <ligand>
        <name>AMP</name>
        <dbReference type="ChEBI" id="CHEBI:456215"/>
    </ligand>
</feature>
<feature type="binding site" evidence="1">
    <location>
        <position position="93"/>
    </location>
    <ligand>
        <name>AMP</name>
        <dbReference type="ChEBI" id="CHEBI:456215"/>
    </ligand>
</feature>
<feature type="binding site" evidence="1">
    <location>
        <position position="128"/>
    </location>
    <ligand>
        <name>ATP</name>
        <dbReference type="ChEBI" id="CHEBI:30616"/>
    </ligand>
</feature>
<feature type="binding site" evidence="1">
    <location>
        <position position="131"/>
    </location>
    <ligand>
        <name>Zn(2+)</name>
        <dbReference type="ChEBI" id="CHEBI:29105"/>
        <note>structural</note>
    </ligand>
</feature>
<feature type="binding site" evidence="1">
    <location>
        <position position="134"/>
    </location>
    <ligand>
        <name>Zn(2+)</name>
        <dbReference type="ChEBI" id="CHEBI:29105"/>
        <note>structural</note>
    </ligand>
</feature>
<feature type="binding site" evidence="1">
    <location>
        <begin position="137"/>
        <end position="138"/>
    </location>
    <ligand>
        <name>ATP</name>
        <dbReference type="ChEBI" id="CHEBI:30616"/>
    </ligand>
</feature>
<feature type="binding site" evidence="1">
    <location>
        <position position="151"/>
    </location>
    <ligand>
        <name>Zn(2+)</name>
        <dbReference type="ChEBI" id="CHEBI:29105"/>
        <note>structural</note>
    </ligand>
</feature>
<feature type="binding site" evidence="1">
    <location>
        <position position="154"/>
    </location>
    <ligand>
        <name>Zn(2+)</name>
        <dbReference type="ChEBI" id="CHEBI:29105"/>
        <note>structural</note>
    </ligand>
</feature>
<feature type="binding site" evidence="1">
    <location>
        <position position="162"/>
    </location>
    <ligand>
        <name>AMP</name>
        <dbReference type="ChEBI" id="CHEBI:456215"/>
    </ligand>
</feature>
<feature type="binding site" evidence="1">
    <location>
        <position position="173"/>
    </location>
    <ligand>
        <name>AMP</name>
        <dbReference type="ChEBI" id="CHEBI:456215"/>
    </ligand>
</feature>
<feature type="binding site" evidence="1">
    <location>
        <position position="201"/>
    </location>
    <ligand>
        <name>ATP</name>
        <dbReference type="ChEBI" id="CHEBI:30616"/>
    </ligand>
</feature>
<dbReference type="EC" id="2.7.4.3" evidence="1"/>
<dbReference type="EMBL" id="CP000517">
    <property type="protein sequence ID" value="ABX26557.1"/>
    <property type="molecule type" value="Genomic_DNA"/>
</dbReference>
<dbReference type="RefSeq" id="WP_003625812.1">
    <property type="nucleotide sequence ID" value="NC_010080.1"/>
</dbReference>
<dbReference type="SMR" id="A8YXM6"/>
<dbReference type="KEGG" id="lhe:lhv_0333"/>
<dbReference type="eggNOG" id="COG0563">
    <property type="taxonomic scope" value="Bacteria"/>
</dbReference>
<dbReference type="HOGENOM" id="CLU_032354_1_2_9"/>
<dbReference type="UniPathway" id="UPA00588">
    <property type="reaction ID" value="UER00649"/>
</dbReference>
<dbReference type="Proteomes" id="UP000000790">
    <property type="component" value="Chromosome"/>
</dbReference>
<dbReference type="GO" id="GO:0005737">
    <property type="term" value="C:cytoplasm"/>
    <property type="evidence" value="ECO:0007669"/>
    <property type="project" value="UniProtKB-SubCell"/>
</dbReference>
<dbReference type="GO" id="GO:0004017">
    <property type="term" value="F:adenylate kinase activity"/>
    <property type="evidence" value="ECO:0007669"/>
    <property type="project" value="UniProtKB-UniRule"/>
</dbReference>
<dbReference type="GO" id="GO:0005524">
    <property type="term" value="F:ATP binding"/>
    <property type="evidence" value="ECO:0007669"/>
    <property type="project" value="UniProtKB-UniRule"/>
</dbReference>
<dbReference type="GO" id="GO:0008270">
    <property type="term" value="F:zinc ion binding"/>
    <property type="evidence" value="ECO:0007669"/>
    <property type="project" value="UniProtKB-UniRule"/>
</dbReference>
<dbReference type="GO" id="GO:0044209">
    <property type="term" value="P:AMP salvage"/>
    <property type="evidence" value="ECO:0007669"/>
    <property type="project" value="UniProtKB-UniRule"/>
</dbReference>
<dbReference type="CDD" id="cd01428">
    <property type="entry name" value="ADK"/>
    <property type="match status" value="1"/>
</dbReference>
<dbReference type="FunFam" id="3.40.50.300:FF:000106">
    <property type="entry name" value="Adenylate kinase mitochondrial"/>
    <property type="match status" value="1"/>
</dbReference>
<dbReference type="Gene3D" id="3.40.50.300">
    <property type="entry name" value="P-loop containing nucleotide triphosphate hydrolases"/>
    <property type="match status" value="1"/>
</dbReference>
<dbReference type="HAMAP" id="MF_00235">
    <property type="entry name" value="Adenylate_kinase_Adk"/>
    <property type="match status" value="1"/>
</dbReference>
<dbReference type="InterPro" id="IPR006259">
    <property type="entry name" value="Adenyl_kin_sub"/>
</dbReference>
<dbReference type="InterPro" id="IPR000850">
    <property type="entry name" value="Adenylat/UMP-CMP_kin"/>
</dbReference>
<dbReference type="InterPro" id="IPR033690">
    <property type="entry name" value="Adenylat_kinase_CS"/>
</dbReference>
<dbReference type="InterPro" id="IPR007862">
    <property type="entry name" value="Adenylate_kinase_lid-dom"/>
</dbReference>
<dbReference type="InterPro" id="IPR027417">
    <property type="entry name" value="P-loop_NTPase"/>
</dbReference>
<dbReference type="NCBIfam" id="TIGR01351">
    <property type="entry name" value="adk"/>
    <property type="match status" value="1"/>
</dbReference>
<dbReference type="NCBIfam" id="NF001380">
    <property type="entry name" value="PRK00279.1-2"/>
    <property type="match status" value="1"/>
</dbReference>
<dbReference type="NCBIfam" id="NF001381">
    <property type="entry name" value="PRK00279.1-3"/>
    <property type="match status" value="1"/>
</dbReference>
<dbReference type="PANTHER" id="PTHR23359">
    <property type="entry name" value="NUCLEOTIDE KINASE"/>
    <property type="match status" value="1"/>
</dbReference>
<dbReference type="Pfam" id="PF00406">
    <property type="entry name" value="ADK"/>
    <property type="match status" value="1"/>
</dbReference>
<dbReference type="Pfam" id="PF05191">
    <property type="entry name" value="ADK_lid"/>
    <property type="match status" value="1"/>
</dbReference>
<dbReference type="PRINTS" id="PR00094">
    <property type="entry name" value="ADENYLTKNASE"/>
</dbReference>
<dbReference type="SUPFAM" id="SSF52540">
    <property type="entry name" value="P-loop containing nucleoside triphosphate hydrolases"/>
    <property type="match status" value="1"/>
</dbReference>
<dbReference type="PROSITE" id="PS00113">
    <property type="entry name" value="ADENYLATE_KINASE"/>
    <property type="match status" value="1"/>
</dbReference>
<reference key="1">
    <citation type="journal article" date="2008" name="J. Bacteriol.">
        <title>Genome sequence of Lactobacillus helveticus: an organism distinguished by selective gene loss and IS element expansion.</title>
        <authorList>
            <person name="Callanan M."/>
            <person name="Kaleta P."/>
            <person name="O'Callaghan J."/>
            <person name="O'Sullivan O."/>
            <person name="Jordan K."/>
            <person name="McAuliffe O."/>
            <person name="Sangrador-Vegas A."/>
            <person name="Slattery L."/>
            <person name="Fitzgerald G.F."/>
            <person name="Beresford T."/>
            <person name="Ross R.P."/>
        </authorList>
    </citation>
    <scope>NUCLEOTIDE SEQUENCE [LARGE SCALE GENOMIC DNA]</scope>
    <source>
        <strain>DPC 4571</strain>
    </source>
</reference>
<protein>
    <recommendedName>
        <fullName evidence="1">Adenylate kinase</fullName>
        <shortName evidence="1">AK</shortName>
        <ecNumber evidence="1">2.7.4.3</ecNumber>
    </recommendedName>
    <alternativeName>
        <fullName evidence="1">ATP-AMP transphosphorylase</fullName>
    </alternativeName>
    <alternativeName>
        <fullName evidence="1">ATP:AMP phosphotransferase</fullName>
    </alternativeName>
    <alternativeName>
        <fullName evidence="1">Adenylate monophosphate kinase</fullName>
    </alternativeName>
</protein>
<evidence type="ECO:0000255" key="1">
    <source>
        <dbReference type="HAMAP-Rule" id="MF_00235"/>
    </source>
</evidence>
<organism>
    <name type="scientific">Lactobacillus helveticus (strain DPC 4571)</name>
    <dbReference type="NCBI Taxonomy" id="405566"/>
    <lineage>
        <taxon>Bacteria</taxon>
        <taxon>Bacillati</taxon>
        <taxon>Bacillota</taxon>
        <taxon>Bacilli</taxon>
        <taxon>Lactobacillales</taxon>
        <taxon>Lactobacillaceae</taxon>
        <taxon>Lactobacillus</taxon>
    </lineage>
</organism>
<comment type="function">
    <text evidence="1">Catalyzes the reversible transfer of the terminal phosphate group between ATP and AMP. Plays an important role in cellular energy homeostasis and in adenine nucleotide metabolism.</text>
</comment>
<comment type="catalytic activity">
    <reaction evidence="1">
        <text>AMP + ATP = 2 ADP</text>
        <dbReference type="Rhea" id="RHEA:12973"/>
        <dbReference type="ChEBI" id="CHEBI:30616"/>
        <dbReference type="ChEBI" id="CHEBI:456215"/>
        <dbReference type="ChEBI" id="CHEBI:456216"/>
        <dbReference type="EC" id="2.7.4.3"/>
    </reaction>
</comment>
<comment type="pathway">
    <text evidence="1">Purine metabolism; AMP biosynthesis via salvage pathway; AMP from ADP: step 1/1.</text>
</comment>
<comment type="subunit">
    <text evidence="1">Monomer.</text>
</comment>
<comment type="subcellular location">
    <subcellularLocation>
        <location evidence="1">Cytoplasm</location>
    </subcellularLocation>
</comment>
<comment type="domain">
    <text evidence="1">Consists of three domains, a large central CORE domain and two small peripheral domains, NMPbind and LID, which undergo movements during catalysis. The LID domain closes over the site of phosphoryl transfer upon ATP binding. Assembling and dissambling the active center during each catalytic cycle provides an effective means to prevent ATP hydrolysis. Some bacteria have evolved a zinc-coordinating structure that stabilizes the LID domain.</text>
</comment>
<comment type="similarity">
    <text evidence="1">Belongs to the adenylate kinase family.</text>
</comment>
<keyword id="KW-0067">ATP-binding</keyword>
<keyword id="KW-0963">Cytoplasm</keyword>
<keyword id="KW-0418">Kinase</keyword>
<keyword id="KW-0479">Metal-binding</keyword>
<keyword id="KW-0545">Nucleotide biosynthesis</keyword>
<keyword id="KW-0547">Nucleotide-binding</keyword>
<keyword id="KW-0808">Transferase</keyword>
<keyword id="KW-0862">Zinc</keyword>
<accession>A8YXM6</accession>
<gene>
    <name evidence="1" type="primary">adk</name>
    <name type="ordered locus">lhv_0333</name>
</gene>
<name>KAD_LACH4</name>
<proteinExistence type="inferred from homology"/>
<sequence>MINLILLGLPGAGKGTASERIVDKYHLTHISTGDMFREAMANKTKVGLEAKSYIDKGNLVPDEVTAKLVEERLSQPDIKEGFILDGFPRTTVQAELLDGITKRLKKPLTNVIALEVDEDTLIKRLSARYMCKNCGATYNKLSKQPKVEGTCDRCGSHEFYQREDDKPEVVKNRLEVNEKMNAPLKDFYQKKGLLTVINGEQTPEKVFEDIDAVLSNNQ</sequence>